<reference key="1">
    <citation type="journal article" date="2007" name="ISME J.">
        <title>Population level functional diversity in a microbial community revealed by comparative genomic and metagenomic analyses.</title>
        <authorList>
            <person name="Bhaya D."/>
            <person name="Grossman A.R."/>
            <person name="Steunou A.-S."/>
            <person name="Khuri N."/>
            <person name="Cohan F.M."/>
            <person name="Hamamura N."/>
            <person name="Melendrez M.C."/>
            <person name="Bateson M.M."/>
            <person name="Ward D.M."/>
            <person name="Heidelberg J.F."/>
        </authorList>
    </citation>
    <scope>NUCLEOTIDE SEQUENCE [LARGE SCALE GENOMIC DNA]</scope>
    <source>
        <strain>JA-2-3B'a(2-13)</strain>
    </source>
</reference>
<protein>
    <recommendedName>
        <fullName evidence="1">DNA-directed RNA polymerase subunit omega</fullName>
        <shortName evidence="1">RNAP omega subunit</shortName>
        <ecNumber evidence="1">2.7.7.6</ecNumber>
    </recommendedName>
    <alternativeName>
        <fullName evidence="1">RNA polymerase omega subunit</fullName>
    </alternativeName>
    <alternativeName>
        <fullName evidence="1">Transcriptase subunit omega</fullName>
    </alternativeName>
</protein>
<name>RPOZ_SYNJB</name>
<keyword id="KW-0240">DNA-directed RNA polymerase</keyword>
<keyword id="KW-0548">Nucleotidyltransferase</keyword>
<keyword id="KW-1185">Reference proteome</keyword>
<keyword id="KW-0804">Transcription</keyword>
<keyword id="KW-0808">Transferase</keyword>
<comment type="function">
    <text evidence="1">Promotes RNA polymerase assembly. Latches the N- and C-terminal regions of the beta' subunit thereby facilitating its interaction with the beta and alpha subunits.</text>
</comment>
<comment type="catalytic activity">
    <reaction evidence="1">
        <text>RNA(n) + a ribonucleoside 5'-triphosphate = RNA(n+1) + diphosphate</text>
        <dbReference type="Rhea" id="RHEA:21248"/>
        <dbReference type="Rhea" id="RHEA-COMP:14527"/>
        <dbReference type="Rhea" id="RHEA-COMP:17342"/>
        <dbReference type="ChEBI" id="CHEBI:33019"/>
        <dbReference type="ChEBI" id="CHEBI:61557"/>
        <dbReference type="ChEBI" id="CHEBI:140395"/>
        <dbReference type="EC" id="2.7.7.6"/>
    </reaction>
</comment>
<comment type="subunit">
    <text evidence="1">In cyanobacteria the RNAP catalytic core is composed of 2 alpha, 1 beta, 1 beta', 1 gamma and 1 omega subunit. When a sigma factor is associated with the core the holoenzyme is formed, which can initiate transcription.</text>
</comment>
<comment type="similarity">
    <text evidence="1">Belongs to the RNA polymerase subunit omega family.</text>
</comment>
<sequence length="79" mass="9317">MASRKNQLAIDNDELMRRVEALINASKNRYRITVQVANRAKRRRYEDPDDIEDGWMKPIRRAVIEMSDELTEPEIIGDE</sequence>
<feature type="chain" id="PRO_0000237518" description="DNA-directed RNA polymerase subunit omega">
    <location>
        <begin position="1"/>
        <end position="79"/>
    </location>
</feature>
<organism>
    <name type="scientific">Synechococcus sp. (strain JA-2-3B'a(2-13))</name>
    <name type="common">Cyanobacteria bacterium Yellowstone B-Prime</name>
    <dbReference type="NCBI Taxonomy" id="321332"/>
    <lineage>
        <taxon>Bacteria</taxon>
        <taxon>Bacillati</taxon>
        <taxon>Cyanobacteriota</taxon>
        <taxon>Cyanophyceae</taxon>
        <taxon>Synechococcales</taxon>
        <taxon>Synechococcaceae</taxon>
        <taxon>Synechococcus</taxon>
    </lineage>
</organism>
<proteinExistence type="inferred from homology"/>
<evidence type="ECO:0000255" key="1">
    <source>
        <dbReference type="HAMAP-Rule" id="MF_00366"/>
    </source>
</evidence>
<accession>Q2JJC6</accession>
<gene>
    <name evidence="1" type="primary">rpoZ</name>
    <name type="ordered locus">CYB_2308</name>
</gene>
<dbReference type="EC" id="2.7.7.6" evidence="1"/>
<dbReference type="EMBL" id="CP000240">
    <property type="protein sequence ID" value="ABD03248.1"/>
    <property type="molecule type" value="Genomic_DNA"/>
</dbReference>
<dbReference type="RefSeq" id="WP_011433877.1">
    <property type="nucleotide sequence ID" value="NC_007776.1"/>
</dbReference>
<dbReference type="SMR" id="Q2JJC6"/>
<dbReference type="STRING" id="321332.CYB_2308"/>
<dbReference type="KEGG" id="cyb:CYB_2308"/>
<dbReference type="eggNOG" id="ENOG5032RMS">
    <property type="taxonomic scope" value="Bacteria"/>
</dbReference>
<dbReference type="HOGENOM" id="CLU_175526_0_0_3"/>
<dbReference type="OrthoDB" id="463386at2"/>
<dbReference type="Proteomes" id="UP000001938">
    <property type="component" value="Chromosome"/>
</dbReference>
<dbReference type="GO" id="GO:0000428">
    <property type="term" value="C:DNA-directed RNA polymerase complex"/>
    <property type="evidence" value="ECO:0007669"/>
    <property type="project" value="UniProtKB-KW"/>
</dbReference>
<dbReference type="GO" id="GO:0003677">
    <property type="term" value="F:DNA binding"/>
    <property type="evidence" value="ECO:0007669"/>
    <property type="project" value="UniProtKB-UniRule"/>
</dbReference>
<dbReference type="GO" id="GO:0003899">
    <property type="term" value="F:DNA-directed RNA polymerase activity"/>
    <property type="evidence" value="ECO:0007669"/>
    <property type="project" value="UniProtKB-UniRule"/>
</dbReference>
<dbReference type="GO" id="GO:0006351">
    <property type="term" value="P:DNA-templated transcription"/>
    <property type="evidence" value="ECO:0007669"/>
    <property type="project" value="UniProtKB-UniRule"/>
</dbReference>
<dbReference type="HAMAP" id="MF_00366">
    <property type="entry name" value="RNApol_bact_RpoZ"/>
    <property type="match status" value="1"/>
</dbReference>
<dbReference type="InterPro" id="IPR003716">
    <property type="entry name" value="DNA-dir_RNA_pol_omega"/>
</dbReference>
<dbReference type="InterPro" id="IPR006110">
    <property type="entry name" value="Pol_omega/Rpo6/RPB6"/>
</dbReference>
<dbReference type="InterPro" id="IPR036161">
    <property type="entry name" value="RPB6/omega-like_sf"/>
</dbReference>
<dbReference type="NCBIfam" id="NF001574">
    <property type="entry name" value="PRK00392.2-5"/>
    <property type="match status" value="1"/>
</dbReference>
<dbReference type="Pfam" id="PF01192">
    <property type="entry name" value="RNA_pol_Rpb6"/>
    <property type="match status" value="1"/>
</dbReference>
<dbReference type="SUPFAM" id="SSF63562">
    <property type="entry name" value="RPB6/omega subunit-like"/>
    <property type="match status" value="1"/>
</dbReference>